<organism>
    <name type="scientific">Thermoplasma acidophilum (strain ATCC 25905 / DSM 1728 / JCM 9062 / NBRC 15155 / AMRC-C165)</name>
    <dbReference type="NCBI Taxonomy" id="273075"/>
    <lineage>
        <taxon>Archaea</taxon>
        <taxon>Methanobacteriati</taxon>
        <taxon>Thermoplasmatota</taxon>
        <taxon>Thermoplasmata</taxon>
        <taxon>Thermoplasmatales</taxon>
        <taxon>Thermoplasmataceae</taxon>
        <taxon>Thermoplasma</taxon>
    </lineage>
</organism>
<feature type="chain" id="PRO_0000220645" description="UPF0159 protein Ta1429">
    <location>
        <begin position="1"/>
        <end position="499"/>
    </location>
</feature>
<feature type="domain" description="ThyX 1" evidence="1">
    <location>
        <begin position="1"/>
        <end position="246"/>
    </location>
</feature>
<feature type="domain" description="ThyX 2" evidence="1">
    <location>
        <begin position="271"/>
        <end position="476"/>
    </location>
</feature>
<comment type="similarity">
    <text evidence="2">Belongs to the UPF0159 family.</text>
</comment>
<reference key="1">
    <citation type="journal article" date="2000" name="Nature">
        <title>The genome sequence of the thermoacidophilic scavenger Thermoplasma acidophilum.</title>
        <authorList>
            <person name="Ruepp A."/>
            <person name="Graml W."/>
            <person name="Santos-Martinez M.-L."/>
            <person name="Koretke K.K."/>
            <person name="Volker C."/>
            <person name="Mewes H.-W."/>
            <person name="Frishman D."/>
            <person name="Stocker S."/>
            <person name="Lupas A.N."/>
            <person name="Baumeister W."/>
        </authorList>
    </citation>
    <scope>NUCLEOTIDE SEQUENCE [LARGE SCALE GENOMIC DNA]</scope>
    <source>
        <strain>ATCC 25905 / DSM 1728 / JCM 9062 / NBRC 15155 / AMRC-C165</strain>
    </source>
</reference>
<proteinExistence type="inferred from homology"/>
<keyword id="KW-1185">Reference proteome</keyword>
<keyword id="KW-0677">Repeat</keyword>
<gene>
    <name type="ordered locus">Ta1429</name>
</gene>
<sequence length="499" mass="57623">MIDRGALMSRYSRASDPDIRSVFHREFEGNQKRSEDFYRRIFLEYGDESIAELVTAQVGIQNVSNVISKVIEEIRIGLSYLEKSTRYVAYDRKVDGHYLFMQAEKIGLSGEAAREYTDLCNRLFDLYSSTLPRIEEEISRQWPIESFDFNIDGNPRNYKELDENGRKLAQKSYRSSVRSRALDDARFILPASTLTNMGVSGNGRSFIHLIQKLMEYGVPESERLAHDLYEELKGEFPQIIDDALSQHGQDIINYKRSLASLFPYTDGGRFEKVRLIKYSNEREEMQKVLALLMYPFAEDASGIISRIKAMELSEASAILERIRDLRKNRRMKVGRPFEAVNYVFEVTTNYGAFRDLQRHRFLSIVRKPLTVSYGFDVPPIIAKMPDLSEEYAEAMKDAERVYRIIKERYGAWIAQYAVPFAYRYPVVFTTNLAEATYFIELRSTPQAHFDLRDIAIRMYNEIKSVHPSLAGIIKFVDTGDYPLGRLSAEVRKNVKAGGI</sequence>
<protein>
    <recommendedName>
        <fullName>UPF0159 protein Ta1429</fullName>
    </recommendedName>
</protein>
<accession>Q9HIB2</accession>
<name>Y1429_THEAC</name>
<dbReference type="EMBL" id="AL445067">
    <property type="protein sequence ID" value="CAC12549.1"/>
    <property type="molecule type" value="Genomic_DNA"/>
</dbReference>
<dbReference type="STRING" id="273075.gene:9572658"/>
<dbReference type="PaxDb" id="273075-Ta1429m"/>
<dbReference type="DNASU" id="1457112"/>
<dbReference type="EnsemblBacteria" id="CAC12549">
    <property type="protein sequence ID" value="CAC12549"/>
    <property type="gene ID" value="CAC12549"/>
</dbReference>
<dbReference type="KEGG" id="tac:Ta1429"/>
<dbReference type="eggNOG" id="arCOG01884">
    <property type="taxonomic scope" value="Archaea"/>
</dbReference>
<dbReference type="HOGENOM" id="CLU_024745_0_0_2"/>
<dbReference type="InParanoid" id="Q9HIB2"/>
<dbReference type="Proteomes" id="UP000001024">
    <property type="component" value="Chromosome"/>
</dbReference>
<dbReference type="GO" id="GO:0050660">
    <property type="term" value="F:flavin adenine dinucleotide binding"/>
    <property type="evidence" value="ECO:0007669"/>
    <property type="project" value="InterPro"/>
</dbReference>
<dbReference type="GO" id="GO:0070402">
    <property type="term" value="F:NADPH binding"/>
    <property type="evidence" value="ECO:0007669"/>
    <property type="project" value="TreeGrafter"/>
</dbReference>
<dbReference type="GO" id="GO:0050797">
    <property type="term" value="F:thymidylate synthase (FAD) activity"/>
    <property type="evidence" value="ECO:0007669"/>
    <property type="project" value="InterPro"/>
</dbReference>
<dbReference type="GO" id="GO:0004799">
    <property type="term" value="F:thymidylate synthase activity"/>
    <property type="evidence" value="ECO:0007669"/>
    <property type="project" value="TreeGrafter"/>
</dbReference>
<dbReference type="GO" id="GO:0006231">
    <property type="term" value="P:dTMP biosynthetic process"/>
    <property type="evidence" value="ECO:0007669"/>
    <property type="project" value="InterPro"/>
</dbReference>
<dbReference type="CDD" id="cd20175">
    <property type="entry name" value="ThyX"/>
    <property type="match status" value="1"/>
</dbReference>
<dbReference type="Gene3D" id="3.30.1360.170">
    <property type="match status" value="2"/>
</dbReference>
<dbReference type="InterPro" id="IPR003669">
    <property type="entry name" value="Thymidylate_synthase_ThyX"/>
</dbReference>
<dbReference type="InterPro" id="IPR036098">
    <property type="entry name" value="Thymidylate_synthase_ThyX_sf"/>
</dbReference>
<dbReference type="PANTHER" id="PTHR34934">
    <property type="entry name" value="FLAVIN-DEPENDENT THYMIDYLATE SYNTHASE"/>
    <property type="match status" value="1"/>
</dbReference>
<dbReference type="PANTHER" id="PTHR34934:SF1">
    <property type="entry name" value="FLAVIN-DEPENDENT THYMIDYLATE SYNTHASE"/>
    <property type="match status" value="1"/>
</dbReference>
<dbReference type="Pfam" id="PF02511">
    <property type="entry name" value="Thy1"/>
    <property type="match status" value="2"/>
</dbReference>
<dbReference type="SUPFAM" id="SSF69796">
    <property type="entry name" value="Thymidylate synthase-complementing protein Thy1"/>
    <property type="match status" value="2"/>
</dbReference>
<dbReference type="PROSITE" id="PS51331">
    <property type="entry name" value="THYX"/>
    <property type="match status" value="2"/>
</dbReference>
<evidence type="ECO:0000255" key="1">
    <source>
        <dbReference type="PROSITE-ProRule" id="PRU00661"/>
    </source>
</evidence>
<evidence type="ECO:0000305" key="2"/>